<comment type="function">
    <text evidence="1">Core subunit of the mitochondrial membrane respiratory chain NADH dehydrogenase (Complex I) that is believed to belong to the minimal assembly required for catalysis. Complex I functions in the transfer of electrons from NADH to the respiratory chain. The immediate electron acceptor for the enzyme is believed to be ubiquinone (By similarity).</text>
</comment>
<comment type="catalytic activity">
    <reaction>
        <text>a ubiquinone + NADH + 5 H(+)(in) = a ubiquinol + NAD(+) + 4 H(+)(out)</text>
        <dbReference type="Rhea" id="RHEA:29091"/>
        <dbReference type="Rhea" id="RHEA-COMP:9565"/>
        <dbReference type="Rhea" id="RHEA-COMP:9566"/>
        <dbReference type="ChEBI" id="CHEBI:15378"/>
        <dbReference type="ChEBI" id="CHEBI:16389"/>
        <dbReference type="ChEBI" id="CHEBI:17976"/>
        <dbReference type="ChEBI" id="CHEBI:57540"/>
        <dbReference type="ChEBI" id="CHEBI:57945"/>
        <dbReference type="EC" id="7.1.1.2"/>
    </reaction>
</comment>
<comment type="subcellular location">
    <subcellularLocation>
        <location evidence="1">Mitochondrion inner membrane</location>
        <topology evidence="1">Multi-pass membrane protein</topology>
    </subcellularLocation>
</comment>
<comment type="similarity">
    <text evidence="3">Belongs to the complex I subunit 1 family.</text>
</comment>
<accession>O78695</accession>
<keyword id="KW-0249">Electron transport</keyword>
<keyword id="KW-0472">Membrane</keyword>
<keyword id="KW-0496">Mitochondrion</keyword>
<keyword id="KW-0999">Mitochondrion inner membrane</keyword>
<keyword id="KW-0520">NAD</keyword>
<keyword id="KW-1185">Reference proteome</keyword>
<keyword id="KW-0679">Respiratory chain</keyword>
<keyword id="KW-1278">Translocase</keyword>
<keyword id="KW-0812">Transmembrane</keyword>
<keyword id="KW-1133">Transmembrane helix</keyword>
<keyword id="KW-0813">Transport</keyword>
<keyword id="KW-0830">Ubiquinone</keyword>
<proteinExistence type="inferred from homology"/>
<protein>
    <recommendedName>
        <fullName>NADH-ubiquinone oxidoreductase chain 1</fullName>
        <ecNumber>7.1.1.2</ecNumber>
    </recommendedName>
    <alternativeName>
        <fullName>NADH dehydrogenase subunit 1</fullName>
    </alternativeName>
</protein>
<name>NU1M_SAPAP</name>
<reference key="1">
    <citation type="journal article" date="1998" name="J. Mol. Evol.">
        <title>Conflict among individual mitochondrial proteins in resolving the phylogeny of eutherian orders.</title>
        <authorList>
            <person name="Cao Y."/>
            <person name="Janke A."/>
            <person name="Waddell P.J."/>
            <person name="Westerman M."/>
            <person name="Takenaka O."/>
            <person name="Murata S."/>
            <person name="Okada N."/>
            <person name="Paeaebo S."/>
            <person name="Hasegawa M."/>
        </authorList>
    </citation>
    <scope>NUCLEOTIDE SEQUENCE [GENOMIC DNA]</scope>
    <source>
        <tissue>Muscle</tissue>
    </source>
</reference>
<gene>
    <name type="primary">MT-ND1</name>
    <name type="synonym">MTND1</name>
    <name type="synonym">NADH1</name>
    <name type="synonym">ND1</name>
</gene>
<geneLocation type="mitochondrion"/>
<organism>
    <name type="scientific">Sapajus apella</name>
    <name type="common">Brown-capped capuchin</name>
    <name type="synonym">Cebus apella</name>
    <dbReference type="NCBI Taxonomy" id="9515"/>
    <lineage>
        <taxon>Eukaryota</taxon>
        <taxon>Metazoa</taxon>
        <taxon>Chordata</taxon>
        <taxon>Craniata</taxon>
        <taxon>Vertebrata</taxon>
        <taxon>Euteleostomi</taxon>
        <taxon>Mammalia</taxon>
        <taxon>Eutheria</taxon>
        <taxon>Euarchontoglires</taxon>
        <taxon>Primates</taxon>
        <taxon>Haplorrhini</taxon>
        <taxon>Platyrrhini</taxon>
        <taxon>Cebidae</taxon>
        <taxon>Cebinae</taxon>
        <taxon>Sapajus</taxon>
    </lineage>
</organism>
<evidence type="ECO:0000250" key="1"/>
<evidence type="ECO:0000255" key="2"/>
<evidence type="ECO:0000305" key="3"/>
<feature type="chain" id="PRO_0000117364" description="NADH-ubiquinone oxidoreductase chain 1">
    <location>
        <begin position="1"/>
        <end position="318"/>
    </location>
</feature>
<feature type="transmembrane region" description="Helical" evidence="2">
    <location>
        <begin position="2"/>
        <end position="22"/>
    </location>
</feature>
<feature type="transmembrane region" description="Helical" evidence="2">
    <location>
        <begin position="70"/>
        <end position="90"/>
    </location>
</feature>
<feature type="transmembrane region" description="Helical" evidence="2">
    <location>
        <begin position="98"/>
        <end position="118"/>
    </location>
</feature>
<feature type="transmembrane region" description="Helical" evidence="2">
    <location>
        <begin position="140"/>
        <end position="160"/>
    </location>
</feature>
<feature type="transmembrane region" description="Helical" evidence="2">
    <location>
        <begin position="173"/>
        <end position="193"/>
    </location>
</feature>
<feature type="transmembrane region" description="Helical" evidence="2">
    <location>
        <begin position="217"/>
        <end position="237"/>
    </location>
</feature>
<feature type="transmembrane region" description="Helical" evidence="2">
    <location>
        <begin position="253"/>
        <end position="273"/>
    </location>
</feature>
<feature type="transmembrane region" description="Helical" evidence="2">
    <location>
        <begin position="294"/>
        <end position="314"/>
    </location>
</feature>
<sequence length="318" mass="35806">MFTINLLLLITPALIAMAFLTLMERKILGYMQLRKGPNTVGPYGVLQPIADAMKLFTKEPLLPSVSTTTLYMAAPTLALTIALLLWTPLPMPYSLINFNLGLLFVLATSSLAVYSILWSGWASNSNYALIGALRAVAQTISYGVTLAIILLSTLLMSGSFNLHSLITTQEQSWLLLPSWPLTMMWFISTLAETNRAPFDLTEGESELISGFNIEYAAGSFALFFMAEYMNIIMMNALTTTIFTATPYNMLTTELYTMNFMTKTLLLTILFLWIRTAYPRFRYDQLMYLLWKKFLPLTLALCMWYISMPMLLSGIPPQT</sequence>
<dbReference type="EC" id="7.1.1.2"/>
<dbReference type="EMBL" id="AB010973">
    <property type="protein sequence ID" value="BAA32098.1"/>
    <property type="molecule type" value="Genomic_DNA"/>
</dbReference>
<dbReference type="SMR" id="O78695"/>
<dbReference type="Proteomes" id="UP000504640">
    <property type="component" value="Unplaced"/>
</dbReference>
<dbReference type="GO" id="GO:0005743">
    <property type="term" value="C:mitochondrial inner membrane"/>
    <property type="evidence" value="ECO:0007669"/>
    <property type="project" value="UniProtKB-SubCell"/>
</dbReference>
<dbReference type="GO" id="GO:0008137">
    <property type="term" value="F:NADH dehydrogenase (ubiquinone) activity"/>
    <property type="evidence" value="ECO:0007669"/>
    <property type="project" value="UniProtKB-EC"/>
</dbReference>
<dbReference type="GO" id="GO:0009060">
    <property type="term" value="P:aerobic respiration"/>
    <property type="evidence" value="ECO:0007669"/>
    <property type="project" value="TreeGrafter"/>
</dbReference>
<dbReference type="HAMAP" id="MF_01350">
    <property type="entry name" value="NDH1_NuoH"/>
    <property type="match status" value="1"/>
</dbReference>
<dbReference type="InterPro" id="IPR001694">
    <property type="entry name" value="NADH_UbQ_OxRdtase_su1/FPO"/>
</dbReference>
<dbReference type="InterPro" id="IPR018086">
    <property type="entry name" value="NADH_UbQ_OxRdtase_su1_CS"/>
</dbReference>
<dbReference type="PANTHER" id="PTHR11432">
    <property type="entry name" value="NADH DEHYDROGENASE SUBUNIT 1"/>
    <property type="match status" value="1"/>
</dbReference>
<dbReference type="PANTHER" id="PTHR11432:SF3">
    <property type="entry name" value="NADH-UBIQUINONE OXIDOREDUCTASE CHAIN 1"/>
    <property type="match status" value="1"/>
</dbReference>
<dbReference type="Pfam" id="PF00146">
    <property type="entry name" value="NADHdh"/>
    <property type="match status" value="1"/>
</dbReference>
<dbReference type="PROSITE" id="PS00667">
    <property type="entry name" value="COMPLEX1_ND1_1"/>
    <property type="match status" value="1"/>
</dbReference>
<dbReference type="PROSITE" id="PS00668">
    <property type="entry name" value="COMPLEX1_ND1_2"/>
    <property type="match status" value="1"/>
</dbReference>